<evidence type="ECO:0000255" key="1">
    <source>
        <dbReference type="HAMAP-Rule" id="MF_01318"/>
    </source>
</evidence>
<evidence type="ECO:0000305" key="2"/>
<feature type="chain" id="PRO_1000141402" description="Large ribosomal subunit protein uL1">
    <location>
        <begin position="1"/>
        <end position="234"/>
    </location>
</feature>
<keyword id="KW-0678">Repressor</keyword>
<keyword id="KW-0687">Ribonucleoprotein</keyword>
<keyword id="KW-0689">Ribosomal protein</keyword>
<keyword id="KW-0694">RNA-binding</keyword>
<keyword id="KW-0699">rRNA-binding</keyword>
<keyword id="KW-0810">Translation regulation</keyword>
<keyword id="KW-0820">tRNA-binding</keyword>
<sequence>MAKLTKRMRVIREKVDATKQYDINEAIALLKELATAKFVESVDVAVNLGIDARKSDQNVRGATVLPHGTGRSVRVAVFTQGANAEAAKAAGAELVGMEDLADQIKKGEMNFDVVIASPDAMRVVGQLGQVLGPRGLMPNPKVGTVTPNVAEAVKNAKAGQVRYRNDKNGIIHTTIGKVDFDADKLKENLEALLVALKKAKPTQAKGVYIKKVSISTTMGAGVAVDQAGLSASVN</sequence>
<accession>B6I5J4</accession>
<comment type="function">
    <text evidence="1">Binds directly to 23S rRNA. The L1 stalk is quite mobile in the ribosome, and is involved in E site tRNA release.</text>
</comment>
<comment type="function">
    <text evidence="1">Protein L1 is also a translational repressor protein, it controls the translation of the L11 operon by binding to its mRNA.</text>
</comment>
<comment type="subunit">
    <text evidence="1">Part of the 50S ribosomal subunit.</text>
</comment>
<comment type="similarity">
    <text evidence="1">Belongs to the universal ribosomal protein uL1 family.</text>
</comment>
<gene>
    <name evidence="1" type="primary">rplA</name>
    <name type="ordered locus">ECSE_4271</name>
</gene>
<proteinExistence type="inferred from homology"/>
<reference key="1">
    <citation type="journal article" date="2008" name="DNA Res.">
        <title>Complete genome sequence and comparative analysis of the wild-type commensal Escherichia coli strain SE11 isolated from a healthy adult.</title>
        <authorList>
            <person name="Oshima K."/>
            <person name="Toh H."/>
            <person name="Ogura Y."/>
            <person name="Sasamoto H."/>
            <person name="Morita H."/>
            <person name="Park S.-H."/>
            <person name="Ooka T."/>
            <person name="Iyoda S."/>
            <person name="Taylor T.D."/>
            <person name="Hayashi T."/>
            <person name="Itoh K."/>
            <person name="Hattori M."/>
        </authorList>
    </citation>
    <scope>NUCLEOTIDE SEQUENCE [LARGE SCALE GENOMIC DNA]</scope>
    <source>
        <strain>SE11</strain>
    </source>
</reference>
<protein>
    <recommendedName>
        <fullName evidence="1">Large ribosomal subunit protein uL1</fullName>
    </recommendedName>
    <alternativeName>
        <fullName evidence="2">50S ribosomal protein L1</fullName>
    </alternativeName>
</protein>
<organism>
    <name type="scientific">Escherichia coli (strain SE11)</name>
    <dbReference type="NCBI Taxonomy" id="409438"/>
    <lineage>
        <taxon>Bacteria</taxon>
        <taxon>Pseudomonadati</taxon>
        <taxon>Pseudomonadota</taxon>
        <taxon>Gammaproteobacteria</taxon>
        <taxon>Enterobacterales</taxon>
        <taxon>Enterobacteriaceae</taxon>
        <taxon>Escherichia</taxon>
    </lineage>
</organism>
<name>RL1_ECOSE</name>
<dbReference type="EMBL" id="AP009240">
    <property type="protein sequence ID" value="BAG79795.1"/>
    <property type="molecule type" value="Genomic_DNA"/>
</dbReference>
<dbReference type="RefSeq" id="WP_001096684.1">
    <property type="nucleotide sequence ID" value="NC_011415.1"/>
</dbReference>
<dbReference type="SMR" id="B6I5J4"/>
<dbReference type="GeneID" id="93777910"/>
<dbReference type="KEGG" id="ecy:ECSE_4271"/>
<dbReference type="HOGENOM" id="CLU_062853_0_0_6"/>
<dbReference type="Proteomes" id="UP000008199">
    <property type="component" value="Chromosome"/>
</dbReference>
<dbReference type="GO" id="GO:0022625">
    <property type="term" value="C:cytosolic large ribosomal subunit"/>
    <property type="evidence" value="ECO:0007669"/>
    <property type="project" value="TreeGrafter"/>
</dbReference>
<dbReference type="GO" id="GO:0019843">
    <property type="term" value="F:rRNA binding"/>
    <property type="evidence" value="ECO:0007669"/>
    <property type="project" value="UniProtKB-UniRule"/>
</dbReference>
<dbReference type="GO" id="GO:0003735">
    <property type="term" value="F:structural constituent of ribosome"/>
    <property type="evidence" value="ECO:0007669"/>
    <property type="project" value="InterPro"/>
</dbReference>
<dbReference type="GO" id="GO:0000049">
    <property type="term" value="F:tRNA binding"/>
    <property type="evidence" value="ECO:0007669"/>
    <property type="project" value="UniProtKB-KW"/>
</dbReference>
<dbReference type="GO" id="GO:0006417">
    <property type="term" value="P:regulation of translation"/>
    <property type="evidence" value="ECO:0007669"/>
    <property type="project" value="UniProtKB-KW"/>
</dbReference>
<dbReference type="GO" id="GO:0006412">
    <property type="term" value="P:translation"/>
    <property type="evidence" value="ECO:0007669"/>
    <property type="project" value="UniProtKB-UniRule"/>
</dbReference>
<dbReference type="CDD" id="cd00403">
    <property type="entry name" value="Ribosomal_L1"/>
    <property type="match status" value="1"/>
</dbReference>
<dbReference type="FunFam" id="3.40.50.790:FF:000001">
    <property type="entry name" value="50S ribosomal protein L1"/>
    <property type="match status" value="1"/>
</dbReference>
<dbReference type="Gene3D" id="3.30.190.20">
    <property type="match status" value="1"/>
</dbReference>
<dbReference type="Gene3D" id="3.40.50.790">
    <property type="match status" value="1"/>
</dbReference>
<dbReference type="HAMAP" id="MF_01318_B">
    <property type="entry name" value="Ribosomal_uL1_B"/>
    <property type="match status" value="1"/>
</dbReference>
<dbReference type="InterPro" id="IPR005878">
    <property type="entry name" value="Ribosom_uL1_bac-type"/>
</dbReference>
<dbReference type="InterPro" id="IPR002143">
    <property type="entry name" value="Ribosomal_uL1"/>
</dbReference>
<dbReference type="InterPro" id="IPR023674">
    <property type="entry name" value="Ribosomal_uL1-like"/>
</dbReference>
<dbReference type="InterPro" id="IPR028364">
    <property type="entry name" value="Ribosomal_uL1/biogenesis"/>
</dbReference>
<dbReference type="InterPro" id="IPR016095">
    <property type="entry name" value="Ribosomal_uL1_3-a/b-sand"/>
</dbReference>
<dbReference type="InterPro" id="IPR023673">
    <property type="entry name" value="Ribosomal_uL1_CS"/>
</dbReference>
<dbReference type="NCBIfam" id="TIGR01169">
    <property type="entry name" value="rplA_bact"/>
    <property type="match status" value="1"/>
</dbReference>
<dbReference type="PANTHER" id="PTHR36427">
    <property type="entry name" value="54S RIBOSOMAL PROTEIN L1, MITOCHONDRIAL"/>
    <property type="match status" value="1"/>
</dbReference>
<dbReference type="PANTHER" id="PTHR36427:SF3">
    <property type="entry name" value="LARGE RIBOSOMAL SUBUNIT PROTEIN UL1M"/>
    <property type="match status" value="1"/>
</dbReference>
<dbReference type="Pfam" id="PF00687">
    <property type="entry name" value="Ribosomal_L1"/>
    <property type="match status" value="1"/>
</dbReference>
<dbReference type="PIRSF" id="PIRSF002155">
    <property type="entry name" value="Ribosomal_L1"/>
    <property type="match status" value="1"/>
</dbReference>
<dbReference type="SUPFAM" id="SSF56808">
    <property type="entry name" value="Ribosomal protein L1"/>
    <property type="match status" value="1"/>
</dbReference>
<dbReference type="PROSITE" id="PS01199">
    <property type="entry name" value="RIBOSOMAL_L1"/>
    <property type="match status" value="1"/>
</dbReference>